<sequence>MRTSQYLLSTLKETPADAEVISHQLMLRAGMIRKLASGLYTWLPTGVRVLKKVENIVREEMNNAGAIEVSMPVVQPADLWQESGRWEQYGPELLRFVDRGERPFVLGPTHEEVITDLIRNELSSYKQLPLNFYQIQTKFRDEVRPRFGVMRSREFLMKDAYSFHTSQESLQETYDAMYAAYSKIFSRMGLDFRAVQADTGSIGGSASHEFQVLAQSGEDDVVFSDTSDYAANIELAEAIAPKEPRAAATQEMTLVDTPNAKTIAELVEQFNLPIEKTVKTLLVKAVEGSSFPLVALLVRGDHELNEVKAEKLPQVASPLTFATEEEIRAVVKAGPGSLGPVNMPIPVVIDRTVAAMSDFAAGANIDGKHYFGINWDRDVATPEVADIRNVVAGDPSPDGQGTLLIKRGIEVGHIFQLGTKYSEALKASVQGEDGRNQILTMGCYGIGVTRVVAAAIEQNYDERGIVWPDAIAPFQVAILPMNMHKSFRVQELAEKLYSELRAQGIEVLLDDRKERPGVMFADMELIGIPHTIVLGDRNLDNDDIEYKYRRNGEKQLIKTGDIVEYLVKQIKG</sequence>
<name>SYP_ECOHS</name>
<evidence type="ECO:0000255" key="1">
    <source>
        <dbReference type="HAMAP-Rule" id="MF_01569"/>
    </source>
</evidence>
<gene>
    <name evidence="1" type="primary">proS</name>
    <name type="ordered locus">EcHS_A0198</name>
</gene>
<keyword id="KW-0030">Aminoacyl-tRNA synthetase</keyword>
<keyword id="KW-0067">ATP-binding</keyword>
<keyword id="KW-0963">Cytoplasm</keyword>
<keyword id="KW-0436">Ligase</keyword>
<keyword id="KW-0547">Nucleotide-binding</keyword>
<keyword id="KW-0648">Protein biosynthesis</keyword>
<accession>A7ZWE2</accession>
<reference key="1">
    <citation type="journal article" date="2008" name="J. Bacteriol.">
        <title>The pangenome structure of Escherichia coli: comparative genomic analysis of E. coli commensal and pathogenic isolates.</title>
        <authorList>
            <person name="Rasko D.A."/>
            <person name="Rosovitz M.J."/>
            <person name="Myers G.S.A."/>
            <person name="Mongodin E.F."/>
            <person name="Fricke W.F."/>
            <person name="Gajer P."/>
            <person name="Crabtree J."/>
            <person name="Sebaihia M."/>
            <person name="Thomson N.R."/>
            <person name="Chaudhuri R."/>
            <person name="Henderson I.R."/>
            <person name="Sperandio V."/>
            <person name="Ravel J."/>
        </authorList>
    </citation>
    <scope>NUCLEOTIDE SEQUENCE [LARGE SCALE GENOMIC DNA]</scope>
    <source>
        <strain>HS</strain>
    </source>
</reference>
<protein>
    <recommendedName>
        <fullName evidence="1">Proline--tRNA ligase</fullName>
        <ecNumber evidence="1">6.1.1.15</ecNumber>
    </recommendedName>
    <alternativeName>
        <fullName evidence="1">Prolyl-tRNA synthetase</fullName>
        <shortName evidence="1">ProRS</shortName>
    </alternativeName>
</protein>
<organism>
    <name type="scientific">Escherichia coli O9:H4 (strain HS)</name>
    <dbReference type="NCBI Taxonomy" id="331112"/>
    <lineage>
        <taxon>Bacteria</taxon>
        <taxon>Pseudomonadati</taxon>
        <taxon>Pseudomonadota</taxon>
        <taxon>Gammaproteobacteria</taxon>
        <taxon>Enterobacterales</taxon>
        <taxon>Enterobacteriaceae</taxon>
        <taxon>Escherichia</taxon>
    </lineage>
</organism>
<comment type="function">
    <text evidence="1">Catalyzes the attachment of proline to tRNA(Pro) in a two-step reaction: proline is first activated by ATP to form Pro-AMP and then transferred to the acceptor end of tRNA(Pro). As ProRS can inadvertently accommodate and process non-cognate amino acids such as alanine and cysteine, to avoid such errors it has two additional distinct editing activities against alanine. One activity is designated as 'pretransfer' editing and involves the tRNA(Pro)-independent hydrolysis of activated Ala-AMP. The other activity is designated 'posttransfer' editing and involves deacylation of mischarged Ala-tRNA(Pro). The misacylated Cys-tRNA(Pro) is not edited by ProRS.</text>
</comment>
<comment type="catalytic activity">
    <reaction evidence="1">
        <text>tRNA(Pro) + L-proline + ATP = L-prolyl-tRNA(Pro) + AMP + diphosphate</text>
        <dbReference type="Rhea" id="RHEA:14305"/>
        <dbReference type="Rhea" id="RHEA-COMP:9700"/>
        <dbReference type="Rhea" id="RHEA-COMP:9702"/>
        <dbReference type="ChEBI" id="CHEBI:30616"/>
        <dbReference type="ChEBI" id="CHEBI:33019"/>
        <dbReference type="ChEBI" id="CHEBI:60039"/>
        <dbReference type="ChEBI" id="CHEBI:78442"/>
        <dbReference type="ChEBI" id="CHEBI:78532"/>
        <dbReference type="ChEBI" id="CHEBI:456215"/>
        <dbReference type="EC" id="6.1.1.15"/>
    </reaction>
</comment>
<comment type="subunit">
    <text evidence="1">Homodimer.</text>
</comment>
<comment type="subcellular location">
    <subcellularLocation>
        <location evidence="1">Cytoplasm</location>
    </subcellularLocation>
</comment>
<comment type="domain">
    <text evidence="1">Consists of three domains: the N-terminal catalytic domain, the editing domain and the C-terminal anticodon-binding domain.</text>
</comment>
<comment type="similarity">
    <text evidence="1">Belongs to the class-II aminoacyl-tRNA synthetase family. ProS type 1 subfamily.</text>
</comment>
<proteinExistence type="inferred from homology"/>
<dbReference type="EC" id="6.1.1.15" evidence="1"/>
<dbReference type="EMBL" id="CP000802">
    <property type="protein sequence ID" value="ABV04596.1"/>
    <property type="molecule type" value="Genomic_DNA"/>
</dbReference>
<dbReference type="RefSeq" id="WP_001260712.1">
    <property type="nucleotide sequence ID" value="NC_009800.1"/>
</dbReference>
<dbReference type="SMR" id="A7ZWE2"/>
<dbReference type="GeneID" id="93777229"/>
<dbReference type="KEGG" id="ecx:EcHS_A0198"/>
<dbReference type="HOGENOM" id="CLU_016739_0_0_6"/>
<dbReference type="GO" id="GO:0005829">
    <property type="term" value="C:cytosol"/>
    <property type="evidence" value="ECO:0007669"/>
    <property type="project" value="TreeGrafter"/>
</dbReference>
<dbReference type="GO" id="GO:0002161">
    <property type="term" value="F:aminoacyl-tRNA deacylase activity"/>
    <property type="evidence" value="ECO:0007669"/>
    <property type="project" value="InterPro"/>
</dbReference>
<dbReference type="GO" id="GO:0005524">
    <property type="term" value="F:ATP binding"/>
    <property type="evidence" value="ECO:0007669"/>
    <property type="project" value="UniProtKB-UniRule"/>
</dbReference>
<dbReference type="GO" id="GO:0004827">
    <property type="term" value="F:proline-tRNA ligase activity"/>
    <property type="evidence" value="ECO:0007669"/>
    <property type="project" value="UniProtKB-UniRule"/>
</dbReference>
<dbReference type="GO" id="GO:0006433">
    <property type="term" value="P:prolyl-tRNA aminoacylation"/>
    <property type="evidence" value="ECO:0007669"/>
    <property type="project" value="UniProtKB-UniRule"/>
</dbReference>
<dbReference type="CDD" id="cd04334">
    <property type="entry name" value="ProRS-INS"/>
    <property type="match status" value="1"/>
</dbReference>
<dbReference type="CDD" id="cd00861">
    <property type="entry name" value="ProRS_anticodon_short"/>
    <property type="match status" value="1"/>
</dbReference>
<dbReference type="CDD" id="cd00779">
    <property type="entry name" value="ProRS_core_prok"/>
    <property type="match status" value="1"/>
</dbReference>
<dbReference type="FunFam" id="3.30.930.10:FF:000012">
    <property type="entry name" value="Proline--tRNA ligase"/>
    <property type="match status" value="1"/>
</dbReference>
<dbReference type="FunFam" id="3.30.930.10:FF:000097">
    <property type="entry name" value="Proline--tRNA ligase"/>
    <property type="match status" value="1"/>
</dbReference>
<dbReference type="FunFam" id="3.40.50.800:FF:000006">
    <property type="entry name" value="Proline--tRNA ligase"/>
    <property type="match status" value="1"/>
</dbReference>
<dbReference type="FunFam" id="3.90.960.10:FF:000001">
    <property type="entry name" value="Proline--tRNA ligase"/>
    <property type="match status" value="1"/>
</dbReference>
<dbReference type="Gene3D" id="3.40.50.800">
    <property type="entry name" value="Anticodon-binding domain"/>
    <property type="match status" value="1"/>
</dbReference>
<dbReference type="Gene3D" id="3.30.930.10">
    <property type="entry name" value="Bira Bifunctional Protein, Domain 2"/>
    <property type="match status" value="2"/>
</dbReference>
<dbReference type="Gene3D" id="3.90.960.10">
    <property type="entry name" value="YbaK/aminoacyl-tRNA synthetase-associated domain"/>
    <property type="match status" value="1"/>
</dbReference>
<dbReference type="HAMAP" id="MF_01569">
    <property type="entry name" value="Pro_tRNA_synth_type1"/>
    <property type="match status" value="1"/>
</dbReference>
<dbReference type="InterPro" id="IPR002314">
    <property type="entry name" value="aa-tRNA-synt_IIb"/>
</dbReference>
<dbReference type="InterPro" id="IPR006195">
    <property type="entry name" value="aa-tRNA-synth_II"/>
</dbReference>
<dbReference type="InterPro" id="IPR045864">
    <property type="entry name" value="aa-tRNA-synth_II/BPL/LPL"/>
</dbReference>
<dbReference type="InterPro" id="IPR004154">
    <property type="entry name" value="Anticodon-bd"/>
</dbReference>
<dbReference type="InterPro" id="IPR036621">
    <property type="entry name" value="Anticodon-bd_dom_sf"/>
</dbReference>
<dbReference type="InterPro" id="IPR002316">
    <property type="entry name" value="Pro-tRNA-ligase_IIa"/>
</dbReference>
<dbReference type="InterPro" id="IPR004500">
    <property type="entry name" value="Pro-tRNA-synth_IIa_bac-type"/>
</dbReference>
<dbReference type="InterPro" id="IPR023717">
    <property type="entry name" value="Pro-tRNA-Synthase_IIa_type1"/>
</dbReference>
<dbReference type="InterPro" id="IPR050062">
    <property type="entry name" value="Pro-tRNA_synthetase"/>
</dbReference>
<dbReference type="InterPro" id="IPR044140">
    <property type="entry name" value="ProRS_anticodon_short"/>
</dbReference>
<dbReference type="InterPro" id="IPR033730">
    <property type="entry name" value="ProRS_core_prok"/>
</dbReference>
<dbReference type="InterPro" id="IPR036754">
    <property type="entry name" value="YbaK/aa-tRNA-synt-asso_dom_sf"/>
</dbReference>
<dbReference type="InterPro" id="IPR007214">
    <property type="entry name" value="YbaK/aa-tRNA-synth-assoc-dom"/>
</dbReference>
<dbReference type="NCBIfam" id="NF006625">
    <property type="entry name" value="PRK09194.1"/>
    <property type="match status" value="1"/>
</dbReference>
<dbReference type="NCBIfam" id="TIGR00409">
    <property type="entry name" value="proS_fam_II"/>
    <property type="match status" value="1"/>
</dbReference>
<dbReference type="PANTHER" id="PTHR42753">
    <property type="entry name" value="MITOCHONDRIAL RIBOSOME PROTEIN L39/PROLYL-TRNA LIGASE FAMILY MEMBER"/>
    <property type="match status" value="1"/>
</dbReference>
<dbReference type="PANTHER" id="PTHR42753:SF2">
    <property type="entry name" value="PROLINE--TRNA LIGASE"/>
    <property type="match status" value="1"/>
</dbReference>
<dbReference type="Pfam" id="PF03129">
    <property type="entry name" value="HGTP_anticodon"/>
    <property type="match status" value="1"/>
</dbReference>
<dbReference type="Pfam" id="PF00587">
    <property type="entry name" value="tRNA-synt_2b"/>
    <property type="match status" value="1"/>
</dbReference>
<dbReference type="Pfam" id="PF04073">
    <property type="entry name" value="tRNA_edit"/>
    <property type="match status" value="1"/>
</dbReference>
<dbReference type="PIRSF" id="PIRSF001535">
    <property type="entry name" value="ProRS_1"/>
    <property type="match status" value="1"/>
</dbReference>
<dbReference type="PRINTS" id="PR01046">
    <property type="entry name" value="TRNASYNTHPRO"/>
</dbReference>
<dbReference type="SUPFAM" id="SSF52954">
    <property type="entry name" value="Class II aaRS ABD-related"/>
    <property type="match status" value="1"/>
</dbReference>
<dbReference type="SUPFAM" id="SSF55681">
    <property type="entry name" value="Class II aaRS and biotin synthetases"/>
    <property type="match status" value="1"/>
</dbReference>
<dbReference type="SUPFAM" id="SSF55826">
    <property type="entry name" value="YbaK/ProRS associated domain"/>
    <property type="match status" value="1"/>
</dbReference>
<dbReference type="PROSITE" id="PS50862">
    <property type="entry name" value="AA_TRNA_LIGASE_II"/>
    <property type="match status" value="1"/>
</dbReference>
<feature type="chain" id="PRO_1000069137" description="Proline--tRNA ligase">
    <location>
        <begin position="1"/>
        <end position="572"/>
    </location>
</feature>